<accession>C1F0Q1</accession>
<protein>
    <recommendedName>
        <fullName evidence="1">Putative manganese efflux pump MntP</fullName>
    </recommendedName>
</protein>
<proteinExistence type="inferred from homology"/>
<keyword id="KW-1003">Cell membrane</keyword>
<keyword id="KW-0406">Ion transport</keyword>
<keyword id="KW-0464">Manganese</keyword>
<keyword id="KW-0472">Membrane</keyword>
<keyword id="KW-0812">Transmembrane</keyword>
<keyword id="KW-1133">Transmembrane helix</keyword>
<keyword id="KW-0813">Transport</keyword>
<name>MNTP_BACC3</name>
<dbReference type="EMBL" id="CP001407">
    <property type="protein sequence ID" value="ACO26044.1"/>
    <property type="molecule type" value="Genomic_DNA"/>
</dbReference>
<dbReference type="RefSeq" id="WP_000142467.1">
    <property type="nucleotide sequence ID" value="NZ_CP009318.1"/>
</dbReference>
<dbReference type="KEGG" id="bcx:BCA_5473"/>
<dbReference type="PATRIC" id="fig|572264.18.peg.5395"/>
<dbReference type="Proteomes" id="UP000002210">
    <property type="component" value="Chromosome"/>
</dbReference>
<dbReference type="GO" id="GO:0005886">
    <property type="term" value="C:plasma membrane"/>
    <property type="evidence" value="ECO:0007669"/>
    <property type="project" value="UniProtKB-SubCell"/>
</dbReference>
<dbReference type="GO" id="GO:0005384">
    <property type="term" value="F:manganese ion transmembrane transporter activity"/>
    <property type="evidence" value="ECO:0007669"/>
    <property type="project" value="UniProtKB-UniRule"/>
</dbReference>
<dbReference type="HAMAP" id="MF_01521">
    <property type="entry name" value="MntP_pump"/>
    <property type="match status" value="1"/>
</dbReference>
<dbReference type="InterPro" id="IPR003810">
    <property type="entry name" value="Mntp/YtaF"/>
</dbReference>
<dbReference type="InterPro" id="IPR022929">
    <property type="entry name" value="Put_MntP"/>
</dbReference>
<dbReference type="PANTHER" id="PTHR35529">
    <property type="entry name" value="MANGANESE EFFLUX PUMP MNTP-RELATED"/>
    <property type="match status" value="1"/>
</dbReference>
<dbReference type="PANTHER" id="PTHR35529:SF1">
    <property type="entry name" value="MANGANESE EFFLUX PUMP MNTP-RELATED"/>
    <property type="match status" value="1"/>
</dbReference>
<dbReference type="Pfam" id="PF02659">
    <property type="entry name" value="Mntp"/>
    <property type="match status" value="1"/>
</dbReference>
<sequence length="182" mass="19658">MTFEQLIPLIIMAFALGMDAFSVSLGMGMMALKIRQILYIGVTIGIFHIIMPFIGMVLGRFLSEQYGDIAHFAGAILLIGLGFYIVYSSILENEETRTAPIGISLFVFAFGVSIDSFSVGLSLGIYGAQTIITILLFGFVSMLLAWIGLLIGRHAKGMLGTYGEIVGGIILVGFGLYLLFPI</sequence>
<gene>
    <name evidence="1" type="primary">mntP</name>
    <name type="ordered locus">BCA_5473</name>
</gene>
<evidence type="ECO:0000255" key="1">
    <source>
        <dbReference type="HAMAP-Rule" id="MF_01521"/>
    </source>
</evidence>
<feature type="chain" id="PRO_1000185102" description="Putative manganese efflux pump MntP">
    <location>
        <begin position="1"/>
        <end position="182"/>
    </location>
</feature>
<feature type="transmembrane region" description="Helical" evidence="1">
    <location>
        <begin position="6"/>
        <end position="26"/>
    </location>
</feature>
<feature type="transmembrane region" description="Helical" evidence="1">
    <location>
        <begin position="37"/>
        <end position="57"/>
    </location>
</feature>
<feature type="transmembrane region" description="Helical" evidence="1">
    <location>
        <begin position="71"/>
        <end position="91"/>
    </location>
</feature>
<feature type="transmembrane region" description="Helical" evidence="1">
    <location>
        <begin position="101"/>
        <end position="121"/>
    </location>
</feature>
<feature type="transmembrane region" description="Helical" evidence="1">
    <location>
        <begin position="131"/>
        <end position="151"/>
    </location>
</feature>
<feature type="transmembrane region" description="Helical" evidence="1">
    <location>
        <begin position="162"/>
        <end position="182"/>
    </location>
</feature>
<reference key="1">
    <citation type="submission" date="2009-02" db="EMBL/GenBank/DDBJ databases">
        <title>Genome sequence of Bacillus cereus 03BB102.</title>
        <authorList>
            <person name="Dodson R.J."/>
            <person name="Jackson P."/>
            <person name="Munk A.C."/>
            <person name="Brettin T."/>
            <person name="Bruce D."/>
            <person name="Detter C."/>
            <person name="Tapia R."/>
            <person name="Han C."/>
            <person name="Sutton G."/>
            <person name="Sims D."/>
        </authorList>
    </citation>
    <scope>NUCLEOTIDE SEQUENCE [LARGE SCALE GENOMIC DNA]</scope>
    <source>
        <strain>03BB102</strain>
    </source>
</reference>
<organism>
    <name type="scientific">Bacillus cereus (strain 03BB102)</name>
    <dbReference type="NCBI Taxonomy" id="572264"/>
    <lineage>
        <taxon>Bacteria</taxon>
        <taxon>Bacillati</taxon>
        <taxon>Bacillota</taxon>
        <taxon>Bacilli</taxon>
        <taxon>Bacillales</taxon>
        <taxon>Bacillaceae</taxon>
        <taxon>Bacillus</taxon>
        <taxon>Bacillus cereus group</taxon>
    </lineage>
</organism>
<comment type="function">
    <text evidence="1">Probably functions as a manganese efflux pump.</text>
</comment>
<comment type="subcellular location">
    <subcellularLocation>
        <location evidence="1">Cell membrane</location>
        <topology evidence="1">Multi-pass membrane protein</topology>
    </subcellularLocation>
</comment>
<comment type="similarity">
    <text evidence="1">Belongs to the MntP (TC 9.B.29) family.</text>
</comment>